<evidence type="ECO:0000250" key="1">
    <source>
        <dbReference type="UniProtKB" id="A2APC3"/>
    </source>
</evidence>
<evidence type="ECO:0000250" key="2">
    <source>
        <dbReference type="UniProtKB" id="Q6ZT98"/>
    </source>
</evidence>
<evidence type="ECO:0000255" key="3">
    <source>
        <dbReference type="PROSITE-ProRule" id="PRU00568"/>
    </source>
</evidence>
<evidence type="ECO:0000269" key="4">
    <source>
    </source>
</evidence>
<evidence type="ECO:0000269" key="5">
    <source>
    </source>
</evidence>
<evidence type="ECO:0000269" key="6">
    <source>
    </source>
</evidence>
<evidence type="ECO:0000305" key="7"/>
<evidence type="ECO:0000312" key="8">
    <source>
        <dbReference type="Proteomes" id="UP000001940"/>
    </source>
</evidence>
<evidence type="ECO:0000312" key="9">
    <source>
        <dbReference type="WormBase" id="F25C8.5"/>
    </source>
</evidence>
<name>TTLL9_CAEEL</name>
<gene>
    <name evidence="9" type="primary">ttll-9</name>
    <name evidence="9" type="ORF">F25C8.5</name>
</gene>
<reference evidence="8" key="1">
    <citation type="journal article" date="1998" name="Science">
        <title>Genome sequence of the nematode C. elegans: a platform for investigating biology.</title>
        <authorList>
            <consortium name="The C. elegans sequencing consortium"/>
        </authorList>
    </citation>
    <scope>NUCLEOTIDE SEQUENCE [LARGE SCALE GENOMIC DNA]</scope>
    <source>
        <strain evidence="8">Bristol N2</strain>
    </source>
</reference>
<reference evidence="7" key="2">
    <citation type="journal article" date="2010" name="J. Biol. Chem.">
        <title>Identification of tubulin deglutamylase among Caenorhabditis elegans and mammalian cytosolic carboxypeptidases (CCPs).</title>
        <authorList>
            <person name="Kimura Y."/>
            <person name="Kurabe N."/>
            <person name="Ikegami K."/>
            <person name="Tsutsumi K."/>
            <person name="Konishi Y."/>
            <person name="Kaplan O.I."/>
            <person name="Kunitomo H."/>
            <person name="Iino Y."/>
            <person name="Blacque O.E."/>
            <person name="Setou M."/>
        </authorList>
    </citation>
    <scope>TISSUE SPECIFICITY</scope>
</reference>
<reference evidence="7" key="3">
    <citation type="journal article" date="2012" name="Dev. Cell">
        <title>Kinesin-13 and tubulin posttranslational modifications regulate microtubule growth in axon regeneration.</title>
        <authorList>
            <person name="Ghosh-Roy A."/>
            <person name="Goncharov A."/>
            <person name="Jin Y."/>
            <person name="Chisholm A.D."/>
        </authorList>
    </citation>
    <scope>FUNCTION</scope>
</reference>
<reference evidence="7" key="4">
    <citation type="journal article" date="2016" name="Biol. Open">
        <title>Caenorhabditis elegans glutamylating enzymes function redundantly in male mating.</title>
        <authorList>
            <person name="Chawla D.G."/>
            <person name="Shah R.V."/>
            <person name="Barth Z.K."/>
            <person name="Lee J.D."/>
            <person name="Badecker K.E."/>
            <person name="Naik A."/>
            <person name="Brewster M.M."/>
            <person name="Salmon T.P."/>
            <person name="Peel N."/>
        </authorList>
    </citation>
    <scope>FUNCTION</scope>
    <scope>DEVELOPMENTAL STAGE</scope>
</reference>
<dbReference type="EC" id="6.-.-.-" evidence="1"/>
<dbReference type="EMBL" id="BX284605">
    <property type="protein sequence ID" value="CAI79169.1"/>
    <property type="molecule type" value="Genomic_DNA"/>
</dbReference>
<dbReference type="RefSeq" id="NP_001023841.1">
    <property type="nucleotide sequence ID" value="NM_001028670.2"/>
</dbReference>
<dbReference type="SMR" id="Q564U4"/>
<dbReference type="FunCoup" id="Q564U4">
    <property type="interactions" value="122"/>
</dbReference>
<dbReference type="STRING" id="6239.F25C8.5.1"/>
<dbReference type="PaxDb" id="6239-F25C8.5"/>
<dbReference type="EnsemblMetazoa" id="F25C8.5.1">
    <property type="protein sequence ID" value="F25C8.5.1"/>
    <property type="gene ID" value="WBGene00044187"/>
</dbReference>
<dbReference type="GeneID" id="3564837"/>
<dbReference type="KEGG" id="cel:CELE_F25C8.5"/>
<dbReference type="UCSC" id="F25C8.5">
    <property type="organism name" value="c. elegans"/>
</dbReference>
<dbReference type="AGR" id="WB:WBGene00044187"/>
<dbReference type="CTD" id="3564837"/>
<dbReference type="WormBase" id="F25C8.5">
    <property type="protein sequence ID" value="CE38330"/>
    <property type="gene ID" value="WBGene00044187"/>
    <property type="gene designation" value="ttll-9"/>
</dbReference>
<dbReference type="eggNOG" id="KOG2157">
    <property type="taxonomic scope" value="Eukaryota"/>
</dbReference>
<dbReference type="GeneTree" id="ENSGT00940000159879"/>
<dbReference type="HOGENOM" id="CLU_010131_0_1_1"/>
<dbReference type="InParanoid" id="Q564U4"/>
<dbReference type="OMA" id="NDITMHL"/>
<dbReference type="OrthoDB" id="202825at2759"/>
<dbReference type="PhylomeDB" id="Q564U4"/>
<dbReference type="PRO" id="PR:Q564U4"/>
<dbReference type="Proteomes" id="UP000001940">
    <property type="component" value="Chromosome V"/>
</dbReference>
<dbReference type="Bgee" id="WBGene00044187">
    <property type="expression patterns" value="Expressed in larva"/>
</dbReference>
<dbReference type="GO" id="GO:0036064">
    <property type="term" value="C:ciliary basal body"/>
    <property type="evidence" value="ECO:0000318"/>
    <property type="project" value="GO_Central"/>
</dbReference>
<dbReference type="GO" id="GO:0005524">
    <property type="term" value="F:ATP binding"/>
    <property type="evidence" value="ECO:0007669"/>
    <property type="project" value="UniProtKB-KW"/>
</dbReference>
<dbReference type="GO" id="GO:0046872">
    <property type="term" value="F:metal ion binding"/>
    <property type="evidence" value="ECO:0007669"/>
    <property type="project" value="InterPro"/>
</dbReference>
<dbReference type="GO" id="GO:0015631">
    <property type="term" value="F:tubulin binding"/>
    <property type="evidence" value="ECO:0000318"/>
    <property type="project" value="GO_Central"/>
</dbReference>
<dbReference type="GO" id="GO:0070740">
    <property type="term" value="F:tubulin-glutamic acid ligase activity"/>
    <property type="evidence" value="ECO:0000318"/>
    <property type="project" value="GO_Central"/>
</dbReference>
<dbReference type="GO" id="GO:0000226">
    <property type="term" value="P:microtubule cytoskeleton organization"/>
    <property type="evidence" value="ECO:0000318"/>
    <property type="project" value="GO_Central"/>
</dbReference>
<dbReference type="GO" id="GO:0036211">
    <property type="term" value="P:protein modification process"/>
    <property type="evidence" value="ECO:0007669"/>
    <property type="project" value="InterPro"/>
</dbReference>
<dbReference type="GO" id="GO:0019098">
    <property type="term" value="P:reproductive behavior"/>
    <property type="evidence" value="ECO:0007669"/>
    <property type="project" value="UniProtKB-ARBA"/>
</dbReference>
<dbReference type="Gene3D" id="3.30.470.20">
    <property type="entry name" value="ATP-grasp fold, B domain"/>
    <property type="match status" value="1"/>
</dbReference>
<dbReference type="InterPro" id="IPR011761">
    <property type="entry name" value="ATP-grasp"/>
</dbReference>
<dbReference type="InterPro" id="IPR004344">
    <property type="entry name" value="TTL/TTLL_fam"/>
</dbReference>
<dbReference type="PANTHER" id="PTHR12241">
    <property type="entry name" value="TUBULIN POLYGLUTAMYLASE"/>
    <property type="match status" value="1"/>
</dbReference>
<dbReference type="PANTHER" id="PTHR12241:SF39">
    <property type="entry name" value="TUBULIN POLYGLUTAMYLASE TTLL9-RELATED"/>
    <property type="match status" value="1"/>
</dbReference>
<dbReference type="Pfam" id="PF03133">
    <property type="entry name" value="TTL"/>
    <property type="match status" value="1"/>
</dbReference>
<dbReference type="SUPFAM" id="SSF56059">
    <property type="entry name" value="Glutathione synthetase ATP-binding domain-like"/>
    <property type="match status" value="1"/>
</dbReference>
<dbReference type="PROSITE" id="PS51221">
    <property type="entry name" value="TTL"/>
    <property type="match status" value="1"/>
</dbReference>
<protein>
    <recommendedName>
        <fullName evidence="7">Probable tubulin polyglutamylase ttll-9</fullName>
        <ecNumber evidence="1">6.-.-.-</ecNumber>
    </recommendedName>
    <alternativeName>
        <fullName evidence="9">Tubulin--tyrosine ligase-like protein 9</fullName>
    </alternativeName>
</protein>
<comment type="function">
    <text evidence="1 5 6 7">Polyglutamylase that forms polyglutamate side chains on tubulin (By similarity). Acts when complexed with other proteins (Probable). Appears to be dispensable for polar spindle formation in dividing embryonic cells, for cilia-dependent osmotic avoidance and for male mating behavior (PubMed:27635036). Probably by regulating microtubule stability via the glutamylation of tubulin, regulates PLM axon developmental growth (PubMed:23000142).</text>
</comment>
<comment type="tissue specificity">
    <text evidence="4">Expressed in head sensory neurons.</text>
</comment>
<comment type="developmental stage">
    <text evidence="6">Expressed in embryos and adults.</text>
</comment>
<comment type="similarity">
    <text evidence="7">Belongs to the tubulin--tyrosine ligase family.</text>
</comment>
<sequence>MSSISNELSVTSSQNVISNSKEQRKKKILFKCALTNTISDVLTNREGWAQTQGDDWQFFWVTREWMTTCYDKHKFSEKQMICHFRNDFELTRKDFLIKNYKKARKAKEKSGIDVVSEFNFLPSSYVLPTEYHLFVEEFRKYPNDTIWIMKPVAGAQGKGIFLFRKLKHVQEWKKKDSSGSEALPYVVQCYVHNPYLVGGKKFDVRIYVLVTSFRPLNAWVHREGFARFSHSRYSTDSVDDAFVHLTNVAVAKTAADYDPERGLKWSLPKLFRFFKSVHGQSKLSKTMNDLTNVIIESLKSVQNLIIQDNHCFELYGYDILFDENLKPWLLEVNASPSLTASSQEDFELKYRILNHMIDVLDIEKKLIGNENEVGGFDLLIKNSKPVELCKVDFHTQPFFGTQFNLRLGDYVEATPMP</sequence>
<proteinExistence type="evidence at transcript level"/>
<keyword id="KW-0067">ATP-binding</keyword>
<keyword id="KW-0436">Ligase</keyword>
<keyword id="KW-0547">Nucleotide-binding</keyword>
<keyword id="KW-1185">Reference proteome</keyword>
<organism evidence="8">
    <name type="scientific">Caenorhabditis elegans</name>
    <dbReference type="NCBI Taxonomy" id="6239"/>
    <lineage>
        <taxon>Eukaryota</taxon>
        <taxon>Metazoa</taxon>
        <taxon>Ecdysozoa</taxon>
        <taxon>Nematoda</taxon>
        <taxon>Chromadorea</taxon>
        <taxon>Rhabditida</taxon>
        <taxon>Rhabditina</taxon>
        <taxon>Rhabditomorpha</taxon>
        <taxon>Rhabditoidea</taxon>
        <taxon>Rhabditidae</taxon>
        <taxon>Peloderinae</taxon>
        <taxon>Caenorhabditis</taxon>
    </lineage>
</organism>
<accession>Q564U4</accession>
<feature type="chain" id="PRO_0000447856" description="Probable tubulin polyglutamylase ttll-9">
    <location>
        <begin position="1"/>
        <end position="417"/>
    </location>
</feature>
<feature type="domain" description="TTL" evidence="3">
    <location>
        <begin position="23"/>
        <end position="372"/>
    </location>
</feature>
<feature type="binding site" evidence="2">
    <location>
        <begin position="188"/>
        <end position="191"/>
    </location>
    <ligand>
        <name>ATP</name>
        <dbReference type="ChEBI" id="CHEBI:30616"/>
    </ligand>
</feature>
<feature type="binding site" evidence="2">
    <location>
        <position position="201"/>
    </location>
    <ligand>
        <name>ATP</name>
        <dbReference type="ChEBI" id="CHEBI:30616"/>
    </ligand>
</feature>
<feature type="binding site" evidence="2">
    <location>
        <position position="203"/>
    </location>
    <ligand>
        <name>ATP</name>
        <dbReference type="ChEBI" id="CHEBI:30616"/>
    </ligand>
</feature>